<sequence length="160" mass="17525">MSEEKTYPMTAEGRDKLQLELEDLIANQRPEITKRIQIARSYGDLSENSEYQSAKDEQAFVEGRIQTLKNMIDNAEIIDSNATAKDEVSLGKTVTFKELPNEEPETYAIVGSVEADPLAGKISNESPMANALIGKKVGETVAVPLPNGISIDVEIINVTK</sequence>
<gene>
    <name evidence="1" type="primary">greA</name>
    <name type="ordered locus">LEUM_0472</name>
</gene>
<comment type="function">
    <text evidence="1">Necessary for efficient RNA polymerase transcription elongation past template-encoded arresting sites. The arresting sites in DNA have the property of trapping a certain fraction of elongating RNA polymerases that pass through, resulting in locked ternary complexes. Cleavage of the nascent transcript by cleavage factors such as GreA or GreB allows the resumption of elongation from the new 3'terminus. GreA releases sequences of 2 to 3 nucleotides.</text>
</comment>
<comment type="similarity">
    <text evidence="1">Belongs to the GreA/GreB family.</text>
</comment>
<dbReference type="EMBL" id="CP000414">
    <property type="protein sequence ID" value="ABJ61588.1"/>
    <property type="molecule type" value="Genomic_DNA"/>
</dbReference>
<dbReference type="RefSeq" id="WP_011679314.1">
    <property type="nucleotide sequence ID" value="NC_008531.1"/>
</dbReference>
<dbReference type="SMR" id="Q03YY4"/>
<dbReference type="EnsemblBacteria" id="ABJ61588">
    <property type="protein sequence ID" value="ABJ61588"/>
    <property type="gene ID" value="LEUM_0472"/>
</dbReference>
<dbReference type="GeneID" id="29576951"/>
<dbReference type="KEGG" id="lme:LEUM_0472"/>
<dbReference type="eggNOG" id="COG0782">
    <property type="taxonomic scope" value="Bacteria"/>
</dbReference>
<dbReference type="HOGENOM" id="CLU_101379_2_1_9"/>
<dbReference type="Proteomes" id="UP000000362">
    <property type="component" value="Chromosome"/>
</dbReference>
<dbReference type="GO" id="GO:0003677">
    <property type="term" value="F:DNA binding"/>
    <property type="evidence" value="ECO:0007669"/>
    <property type="project" value="UniProtKB-UniRule"/>
</dbReference>
<dbReference type="GO" id="GO:0070063">
    <property type="term" value="F:RNA polymerase binding"/>
    <property type="evidence" value="ECO:0007669"/>
    <property type="project" value="InterPro"/>
</dbReference>
<dbReference type="GO" id="GO:0006354">
    <property type="term" value="P:DNA-templated transcription elongation"/>
    <property type="evidence" value="ECO:0007669"/>
    <property type="project" value="TreeGrafter"/>
</dbReference>
<dbReference type="GO" id="GO:0032784">
    <property type="term" value="P:regulation of DNA-templated transcription elongation"/>
    <property type="evidence" value="ECO:0007669"/>
    <property type="project" value="UniProtKB-UniRule"/>
</dbReference>
<dbReference type="FunFam" id="1.10.287.180:FF:000001">
    <property type="entry name" value="Transcription elongation factor GreA"/>
    <property type="match status" value="1"/>
</dbReference>
<dbReference type="FunFam" id="3.10.50.30:FF:000001">
    <property type="entry name" value="Transcription elongation factor GreA"/>
    <property type="match status" value="1"/>
</dbReference>
<dbReference type="Gene3D" id="3.10.50.30">
    <property type="entry name" value="Transcription elongation factor, GreA/GreB, C-terminal domain"/>
    <property type="match status" value="1"/>
</dbReference>
<dbReference type="Gene3D" id="1.10.287.180">
    <property type="entry name" value="Transcription elongation factor, GreA/GreB, N-terminal domain"/>
    <property type="match status" value="1"/>
</dbReference>
<dbReference type="HAMAP" id="MF_00105">
    <property type="entry name" value="GreA_GreB"/>
    <property type="match status" value="1"/>
</dbReference>
<dbReference type="InterPro" id="IPR036953">
    <property type="entry name" value="GreA/GreB_C_sf"/>
</dbReference>
<dbReference type="InterPro" id="IPR018151">
    <property type="entry name" value="TF_GreA/GreB_CS"/>
</dbReference>
<dbReference type="InterPro" id="IPR006359">
    <property type="entry name" value="Tscrpt_elong_fac_GreA"/>
</dbReference>
<dbReference type="InterPro" id="IPR028624">
    <property type="entry name" value="Tscrpt_elong_fac_GreA/B"/>
</dbReference>
<dbReference type="InterPro" id="IPR001437">
    <property type="entry name" value="Tscrpt_elong_fac_GreA/B_C"/>
</dbReference>
<dbReference type="InterPro" id="IPR023459">
    <property type="entry name" value="Tscrpt_elong_fac_GreA/B_fam"/>
</dbReference>
<dbReference type="InterPro" id="IPR022691">
    <property type="entry name" value="Tscrpt_elong_fac_GreA/B_N"/>
</dbReference>
<dbReference type="InterPro" id="IPR036805">
    <property type="entry name" value="Tscrpt_elong_fac_GreA/B_N_sf"/>
</dbReference>
<dbReference type="NCBIfam" id="TIGR01462">
    <property type="entry name" value="greA"/>
    <property type="match status" value="1"/>
</dbReference>
<dbReference type="NCBIfam" id="NF001261">
    <property type="entry name" value="PRK00226.1-2"/>
    <property type="match status" value="1"/>
</dbReference>
<dbReference type="NCBIfam" id="NF001263">
    <property type="entry name" value="PRK00226.1-4"/>
    <property type="match status" value="1"/>
</dbReference>
<dbReference type="PANTHER" id="PTHR30437">
    <property type="entry name" value="TRANSCRIPTION ELONGATION FACTOR GREA"/>
    <property type="match status" value="1"/>
</dbReference>
<dbReference type="PANTHER" id="PTHR30437:SF4">
    <property type="entry name" value="TRANSCRIPTION ELONGATION FACTOR GREA"/>
    <property type="match status" value="1"/>
</dbReference>
<dbReference type="Pfam" id="PF01272">
    <property type="entry name" value="GreA_GreB"/>
    <property type="match status" value="1"/>
</dbReference>
<dbReference type="Pfam" id="PF03449">
    <property type="entry name" value="GreA_GreB_N"/>
    <property type="match status" value="1"/>
</dbReference>
<dbReference type="PIRSF" id="PIRSF006092">
    <property type="entry name" value="GreA_GreB"/>
    <property type="match status" value="1"/>
</dbReference>
<dbReference type="SUPFAM" id="SSF54534">
    <property type="entry name" value="FKBP-like"/>
    <property type="match status" value="1"/>
</dbReference>
<dbReference type="SUPFAM" id="SSF46557">
    <property type="entry name" value="GreA transcript cleavage protein, N-terminal domain"/>
    <property type="match status" value="1"/>
</dbReference>
<dbReference type="PROSITE" id="PS00829">
    <property type="entry name" value="GREAB_1"/>
    <property type="match status" value="1"/>
</dbReference>
<dbReference type="PROSITE" id="PS00830">
    <property type="entry name" value="GREAB_2"/>
    <property type="match status" value="1"/>
</dbReference>
<reference key="1">
    <citation type="journal article" date="2006" name="Proc. Natl. Acad. Sci. U.S.A.">
        <title>Comparative genomics of the lactic acid bacteria.</title>
        <authorList>
            <person name="Makarova K.S."/>
            <person name="Slesarev A."/>
            <person name="Wolf Y.I."/>
            <person name="Sorokin A."/>
            <person name="Mirkin B."/>
            <person name="Koonin E.V."/>
            <person name="Pavlov A."/>
            <person name="Pavlova N."/>
            <person name="Karamychev V."/>
            <person name="Polouchine N."/>
            <person name="Shakhova V."/>
            <person name="Grigoriev I."/>
            <person name="Lou Y."/>
            <person name="Rohksar D."/>
            <person name="Lucas S."/>
            <person name="Huang K."/>
            <person name="Goodstein D.M."/>
            <person name="Hawkins T."/>
            <person name="Plengvidhya V."/>
            <person name="Welker D."/>
            <person name="Hughes J."/>
            <person name="Goh Y."/>
            <person name="Benson A."/>
            <person name="Baldwin K."/>
            <person name="Lee J.-H."/>
            <person name="Diaz-Muniz I."/>
            <person name="Dosti B."/>
            <person name="Smeianov V."/>
            <person name="Wechter W."/>
            <person name="Barabote R."/>
            <person name="Lorca G."/>
            <person name="Altermann E."/>
            <person name="Barrangou R."/>
            <person name="Ganesan B."/>
            <person name="Xie Y."/>
            <person name="Rawsthorne H."/>
            <person name="Tamir D."/>
            <person name="Parker C."/>
            <person name="Breidt F."/>
            <person name="Broadbent J.R."/>
            <person name="Hutkins R."/>
            <person name="O'Sullivan D."/>
            <person name="Steele J."/>
            <person name="Unlu G."/>
            <person name="Saier M.H. Jr."/>
            <person name="Klaenhammer T."/>
            <person name="Richardson P."/>
            <person name="Kozyavkin S."/>
            <person name="Weimer B.C."/>
            <person name="Mills D.A."/>
        </authorList>
    </citation>
    <scope>NUCLEOTIDE SEQUENCE [LARGE SCALE GENOMIC DNA]</scope>
    <source>
        <strain>ATCC 8293 / DSM 20343 / BCRC 11652 / CCM 1803 / JCM 6124 / NCDO 523 / NBRC 100496 / NCIMB 8023 / NCTC 12954 / NRRL B-1118 / 37Y</strain>
    </source>
</reference>
<feature type="chain" id="PRO_1000034273" description="Transcription elongation factor GreA">
    <location>
        <begin position="1"/>
        <end position="160"/>
    </location>
</feature>
<feature type="coiled-coil region" evidence="1">
    <location>
        <begin position="49"/>
        <end position="77"/>
    </location>
</feature>
<organism>
    <name type="scientific">Leuconostoc mesenteroides subsp. mesenteroides (strain ATCC 8293 / DSM 20343 / BCRC 11652 / CCM 1803 / JCM 6124 / NCDO 523 / NBRC 100496 / NCIMB 8023 / NCTC 12954 / NRRL B-1118 / 37Y)</name>
    <dbReference type="NCBI Taxonomy" id="203120"/>
    <lineage>
        <taxon>Bacteria</taxon>
        <taxon>Bacillati</taxon>
        <taxon>Bacillota</taxon>
        <taxon>Bacilli</taxon>
        <taxon>Lactobacillales</taxon>
        <taxon>Lactobacillaceae</taxon>
        <taxon>Leuconostoc</taxon>
    </lineage>
</organism>
<keyword id="KW-0175">Coiled coil</keyword>
<keyword id="KW-0238">DNA-binding</keyword>
<keyword id="KW-1185">Reference proteome</keyword>
<keyword id="KW-0804">Transcription</keyword>
<keyword id="KW-0805">Transcription regulation</keyword>
<protein>
    <recommendedName>
        <fullName evidence="1">Transcription elongation factor GreA</fullName>
    </recommendedName>
    <alternativeName>
        <fullName evidence="1">Transcript cleavage factor GreA</fullName>
    </alternativeName>
</protein>
<accession>Q03YY4</accession>
<evidence type="ECO:0000255" key="1">
    <source>
        <dbReference type="HAMAP-Rule" id="MF_00105"/>
    </source>
</evidence>
<proteinExistence type="inferred from homology"/>
<name>GREA_LEUMM</name>